<dbReference type="GO" id="GO:0005576">
    <property type="term" value="C:extracellular region"/>
    <property type="evidence" value="ECO:0007669"/>
    <property type="project" value="UniProtKB-SubCell"/>
</dbReference>
<keyword id="KW-0027">Amidation</keyword>
<keyword id="KW-0903">Direct protein sequencing</keyword>
<keyword id="KW-0964">Secreted</keyword>
<comment type="subcellular location">
    <subcellularLocation>
        <location evidence="1">Secreted</location>
    </subcellularLocation>
</comment>
<comment type="tissue specificity">
    <text evidence="4">Expressed by the skin glands.</text>
</comment>
<comment type="mass spectrometry" mass="1538.0" method="MALDI" evidence="1"/>
<protein>
    <recommendedName>
        <fullName evidence="2">Caerulein precursor fragment-related peptide BM2</fullName>
    </recommendedName>
    <alternativeName>
        <fullName evidence="2">CPF-RP-BM2</fullName>
    </alternativeName>
</protein>
<organism evidence="2">
    <name type="scientific">Xenopus boumbaensis</name>
    <name type="common">Mawa clawed frog</name>
    <dbReference type="NCBI Taxonomy" id="288550"/>
    <lineage>
        <taxon>Eukaryota</taxon>
        <taxon>Metazoa</taxon>
        <taxon>Chordata</taxon>
        <taxon>Craniata</taxon>
        <taxon>Vertebrata</taxon>
        <taxon>Euteleostomi</taxon>
        <taxon>Amphibia</taxon>
        <taxon>Batrachia</taxon>
        <taxon>Anura</taxon>
        <taxon>Pipoidea</taxon>
        <taxon>Pipidae</taxon>
        <taxon>Xenopodinae</taxon>
        <taxon>Xenopus</taxon>
        <taxon>Xenopus</taxon>
    </lineage>
</organism>
<feature type="peptide" id="PRO_0000440786" description="Caerulein precursor fragment-related peptide BM2" evidence="1">
    <location>
        <begin position="1"/>
        <end position="17"/>
    </location>
</feature>
<feature type="modified residue" description="Valine amide" evidence="1">
    <location>
        <position position="17"/>
    </location>
</feature>
<accession>C0HKL2</accession>
<sequence length="17" mass="1539">GIGSALAKAAKLVAGIV</sequence>
<proteinExistence type="evidence at protein level"/>
<evidence type="ECO:0000269" key="1">
    <source>
    </source>
</evidence>
<evidence type="ECO:0000303" key="2">
    <source>
    </source>
</evidence>
<evidence type="ECO:0000305" key="3"/>
<evidence type="ECO:0000305" key="4">
    <source>
    </source>
</evidence>
<name>CRBM2_XENBM</name>
<reference evidence="3" key="1">
    <citation type="journal article" date="2015" name="Peptides">
        <title>Host-defense and trefoil factor family peptides in skin secretions of the Mawa clawed frog Xenopus boumbaensis (Pipidae).</title>
        <authorList>
            <person name="Conlon J.M."/>
            <person name="Mechkarska M."/>
            <person name="Kolodziejek J."/>
            <person name="Leprince J."/>
            <person name="Coquet L."/>
            <person name="Jouenne T."/>
            <person name="Vaudry H."/>
            <person name="Nowotny N."/>
            <person name="King J.D."/>
        </authorList>
    </citation>
    <scope>PROTEIN SEQUENCE</scope>
    <scope>SUBCELLULAR LOCATION</scope>
    <scope>MASS SPECTROMETRY</scope>
    <scope>AMIDATION AT VAL-17</scope>
    <source>
        <tissue evidence="2">Skin secretion</tissue>
    </source>
</reference>